<protein>
    <recommendedName>
        <fullName evidence="1">NH(3)-dependent NAD(+) synthetase</fullName>
        <ecNumber evidence="1">6.3.1.5</ecNumber>
    </recommendedName>
</protein>
<accession>Q3Z287</accession>
<organism>
    <name type="scientific">Shigella sonnei (strain Ss046)</name>
    <dbReference type="NCBI Taxonomy" id="300269"/>
    <lineage>
        <taxon>Bacteria</taxon>
        <taxon>Pseudomonadati</taxon>
        <taxon>Pseudomonadota</taxon>
        <taxon>Gammaproteobacteria</taxon>
        <taxon>Enterobacterales</taxon>
        <taxon>Enterobacteriaceae</taxon>
        <taxon>Shigella</taxon>
    </lineage>
</organism>
<reference key="1">
    <citation type="journal article" date="2005" name="Nucleic Acids Res.">
        <title>Genome dynamics and diversity of Shigella species, the etiologic agents of bacillary dysentery.</title>
        <authorList>
            <person name="Yang F."/>
            <person name="Yang J."/>
            <person name="Zhang X."/>
            <person name="Chen L."/>
            <person name="Jiang Y."/>
            <person name="Yan Y."/>
            <person name="Tang X."/>
            <person name="Wang J."/>
            <person name="Xiong Z."/>
            <person name="Dong J."/>
            <person name="Xue Y."/>
            <person name="Zhu Y."/>
            <person name="Xu X."/>
            <person name="Sun L."/>
            <person name="Chen S."/>
            <person name="Nie H."/>
            <person name="Peng J."/>
            <person name="Xu J."/>
            <person name="Wang Y."/>
            <person name="Yuan Z."/>
            <person name="Wen Y."/>
            <person name="Yao Z."/>
            <person name="Shen Y."/>
            <person name="Qiang B."/>
            <person name="Hou Y."/>
            <person name="Yu J."/>
            <person name="Jin Q."/>
        </authorList>
    </citation>
    <scope>NUCLEOTIDE SEQUENCE [LARGE SCALE GENOMIC DNA]</scope>
    <source>
        <strain>Ss046</strain>
    </source>
</reference>
<dbReference type="EC" id="6.3.1.5" evidence="1"/>
<dbReference type="EMBL" id="CP000038">
    <property type="protein sequence ID" value="AAZ88125.1"/>
    <property type="molecule type" value="Genomic_DNA"/>
</dbReference>
<dbReference type="RefSeq" id="WP_000175009.1">
    <property type="nucleotide sequence ID" value="NC_007384.1"/>
</dbReference>
<dbReference type="SMR" id="Q3Z287"/>
<dbReference type="GeneID" id="75203046"/>
<dbReference type="KEGG" id="ssn:SSON_1418"/>
<dbReference type="HOGENOM" id="CLU_059327_3_0_6"/>
<dbReference type="UniPathway" id="UPA00253">
    <property type="reaction ID" value="UER00333"/>
</dbReference>
<dbReference type="Proteomes" id="UP000002529">
    <property type="component" value="Chromosome"/>
</dbReference>
<dbReference type="GO" id="GO:0005737">
    <property type="term" value="C:cytoplasm"/>
    <property type="evidence" value="ECO:0007669"/>
    <property type="project" value="InterPro"/>
</dbReference>
<dbReference type="GO" id="GO:0005524">
    <property type="term" value="F:ATP binding"/>
    <property type="evidence" value="ECO:0007669"/>
    <property type="project" value="UniProtKB-UniRule"/>
</dbReference>
<dbReference type="GO" id="GO:0004359">
    <property type="term" value="F:glutaminase activity"/>
    <property type="evidence" value="ECO:0007669"/>
    <property type="project" value="InterPro"/>
</dbReference>
<dbReference type="GO" id="GO:0046872">
    <property type="term" value="F:metal ion binding"/>
    <property type="evidence" value="ECO:0007669"/>
    <property type="project" value="UniProtKB-KW"/>
</dbReference>
<dbReference type="GO" id="GO:0003952">
    <property type="term" value="F:NAD+ synthase (glutamine-hydrolyzing) activity"/>
    <property type="evidence" value="ECO:0007669"/>
    <property type="project" value="InterPro"/>
</dbReference>
<dbReference type="GO" id="GO:0008795">
    <property type="term" value="F:NAD+ synthase activity"/>
    <property type="evidence" value="ECO:0007669"/>
    <property type="project" value="UniProtKB-UniRule"/>
</dbReference>
<dbReference type="GO" id="GO:0009435">
    <property type="term" value="P:NAD biosynthetic process"/>
    <property type="evidence" value="ECO:0007669"/>
    <property type="project" value="UniProtKB-UniRule"/>
</dbReference>
<dbReference type="CDD" id="cd00553">
    <property type="entry name" value="NAD_synthase"/>
    <property type="match status" value="1"/>
</dbReference>
<dbReference type="FunFam" id="3.40.50.620:FF:000015">
    <property type="entry name" value="NH(3)-dependent NAD(+) synthetase"/>
    <property type="match status" value="1"/>
</dbReference>
<dbReference type="Gene3D" id="3.40.50.620">
    <property type="entry name" value="HUPs"/>
    <property type="match status" value="1"/>
</dbReference>
<dbReference type="HAMAP" id="MF_00193">
    <property type="entry name" value="NadE_ammonia_dep"/>
    <property type="match status" value="1"/>
</dbReference>
<dbReference type="InterPro" id="IPR022310">
    <property type="entry name" value="NAD/GMP_synthase"/>
</dbReference>
<dbReference type="InterPro" id="IPR003694">
    <property type="entry name" value="NAD_synthase"/>
</dbReference>
<dbReference type="InterPro" id="IPR022926">
    <property type="entry name" value="NH(3)-dep_NAD(+)_synth"/>
</dbReference>
<dbReference type="InterPro" id="IPR014729">
    <property type="entry name" value="Rossmann-like_a/b/a_fold"/>
</dbReference>
<dbReference type="NCBIfam" id="TIGR00552">
    <property type="entry name" value="nadE"/>
    <property type="match status" value="1"/>
</dbReference>
<dbReference type="NCBIfam" id="NF001979">
    <property type="entry name" value="PRK00768.1"/>
    <property type="match status" value="1"/>
</dbReference>
<dbReference type="PANTHER" id="PTHR23090">
    <property type="entry name" value="NH 3 /GLUTAMINE-DEPENDENT NAD + SYNTHETASE"/>
    <property type="match status" value="1"/>
</dbReference>
<dbReference type="PANTHER" id="PTHR23090:SF7">
    <property type="entry name" value="NH(3)-DEPENDENT NAD(+) SYNTHETASE"/>
    <property type="match status" value="1"/>
</dbReference>
<dbReference type="Pfam" id="PF02540">
    <property type="entry name" value="NAD_synthase"/>
    <property type="match status" value="1"/>
</dbReference>
<dbReference type="SUPFAM" id="SSF52402">
    <property type="entry name" value="Adenine nucleotide alpha hydrolases-like"/>
    <property type="match status" value="1"/>
</dbReference>
<proteinExistence type="inferred from homology"/>
<comment type="function">
    <text evidence="1">Catalyzes the ATP-dependent amidation of deamido-NAD to form NAD. Uses ammonia as a nitrogen source.</text>
</comment>
<comment type="catalytic activity">
    <reaction evidence="1">
        <text>deamido-NAD(+) + NH4(+) + ATP = AMP + diphosphate + NAD(+) + H(+)</text>
        <dbReference type="Rhea" id="RHEA:21188"/>
        <dbReference type="ChEBI" id="CHEBI:15378"/>
        <dbReference type="ChEBI" id="CHEBI:28938"/>
        <dbReference type="ChEBI" id="CHEBI:30616"/>
        <dbReference type="ChEBI" id="CHEBI:33019"/>
        <dbReference type="ChEBI" id="CHEBI:57540"/>
        <dbReference type="ChEBI" id="CHEBI:58437"/>
        <dbReference type="ChEBI" id="CHEBI:456215"/>
        <dbReference type="EC" id="6.3.1.5"/>
    </reaction>
</comment>
<comment type="pathway">
    <text evidence="1">Cofactor biosynthesis; NAD(+) biosynthesis; NAD(+) from deamido-NAD(+) (ammonia route): step 1/1.</text>
</comment>
<comment type="subunit">
    <text evidence="1">Homodimer.</text>
</comment>
<comment type="similarity">
    <text evidence="1">Belongs to the NAD synthetase family.</text>
</comment>
<sequence length="275" mass="30638">MTLQQQIIKALGAKPQINAEEEIRRSIDFLKSYLQTYPFIKSLVLGISGGQDSTLAGKLCQMAINELRLETGNESLQFIAVRLPYGVQADEQDCQDAIAFIQPDRVLTVNIKGAVLASEQALREAGIELSDFVRGNEKARERMKAQYSIAGMTSGVVVGTDHAAEAITGFFTKYGDGGTDINPLYRLNKRQGKQLLAALGCPEHLYKKAPTADLEDDRPSLPDEVALGVTYDNIDDYLEGKNVPEQVARTIENWYLKTEHKRRPPITVFDDFWKK</sequence>
<feature type="chain" id="PRO_1000077610" description="NH(3)-dependent NAD(+) synthetase">
    <location>
        <begin position="1"/>
        <end position="275"/>
    </location>
</feature>
<feature type="binding site" evidence="1">
    <location>
        <begin position="46"/>
        <end position="53"/>
    </location>
    <ligand>
        <name>ATP</name>
        <dbReference type="ChEBI" id="CHEBI:30616"/>
    </ligand>
</feature>
<feature type="binding site" evidence="1">
    <location>
        <position position="52"/>
    </location>
    <ligand>
        <name>Mg(2+)</name>
        <dbReference type="ChEBI" id="CHEBI:18420"/>
    </ligand>
</feature>
<feature type="binding site" evidence="1">
    <location>
        <position position="140"/>
    </location>
    <ligand>
        <name>deamido-NAD(+)</name>
        <dbReference type="ChEBI" id="CHEBI:58437"/>
    </ligand>
</feature>
<feature type="binding site" evidence="1">
    <location>
        <position position="160"/>
    </location>
    <ligand>
        <name>ATP</name>
        <dbReference type="ChEBI" id="CHEBI:30616"/>
    </ligand>
</feature>
<feature type="binding site" evidence="1">
    <location>
        <position position="165"/>
    </location>
    <ligand>
        <name>Mg(2+)</name>
        <dbReference type="ChEBI" id="CHEBI:18420"/>
    </ligand>
</feature>
<feature type="binding site" evidence="1">
    <location>
        <position position="173"/>
    </location>
    <ligand>
        <name>deamido-NAD(+)</name>
        <dbReference type="ChEBI" id="CHEBI:58437"/>
    </ligand>
</feature>
<feature type="binding site" evidence="1">
    <location>
        <position position="180"/>
    </location>
    <ligand>
        <name>deamido-NAD(+)</name>
        <dbReference type="ChEBI" id="CHEBI:58437"/>
    </ligand>
</feature>
<feature type="binding site" evidence="1">
    <location>
        <position position="189"/>
    </location>
    <ligand>
        <name>ATP</name>
        <dbReference type="ChEBI" id="CHEBI:30616"/>
    </ligand>
</feature>
<feature type="binding site" evidence="1">
    <location>
        <position position="211"/>
    </location>
    <ligand>
        <name>ATP</name>
        <dbReference type="ChEBI" id="CHEBI:30616"/>
    </ligand>
</feature>
<feature type="binding site" evidence="1">
    <location>
        <begin position="260"/>
        <end position="261"/>
    </location>
    <ligand>
        <name>deamido-NAD(+)</name>
        <dbReference type="ChEBI" id="CHEBI:58437"/>
    </ligand>
</feature>
<evidence type="ECO:0000255" key="1">
    <source>
        <dbReference type="HAMAP-Rule" id="MF_00193"/>
    </source>
</evidence>
<gene>
    <name evidence="1" type="primary">nadE</name>
    <name type="ordered locus">SSON_1418</name>
</gene>
<keyword id="KW-0067">ATP-binding</keyword>
<keyword id="KW-0436">Ligase</keyword>
<keyword id="KW-0460">Magnesium</keyword>
<keyword id="KW-0479">Metal-binding</keyword>
<keyword id="KW-0520">NAD</keyword>
<keyword id="KW-0547">Nucleotide-binding</keyword>
<keyword id="KW-1185">Reference proteome</keyword>
<name>NADE_SHISS</name>